<evidence type="ECO:0000250" key="1"/>
<evidence type="ECO:0000255" key="2"/>
<evidence type="ECO:0000255" key="3">
    <source>
        <dbReference type="PROSITE-ProRule" id="PRU00272"/>
    </source>
</evidence>
<evidence type="ECO:0000305" key="4"/>
<organism>
    <name type="scientific">Vanderwaltozyma polyspora (strain ATCC 22028 / DSM 70294 / BCRC 21397 / CBS 2163 / NBRC 10782 / NRRL Y-8283 / UCD 57-17)</name>
    <name type="common">Kluyveromyces polysporus</name>
    <dbReference type="NCBI Taxonomy" id="436907"/>
    <lineage>
        <taxon>Eukaryota</taxon>
        <taxon>Fungi</taxon>
        <taxon>Dikarya</taxon>
        <taxon>Ascomycota</taxon>
        <taxon>Saccharomycotina</taxon>
        <taxon>Saccharomycetes</taxon>
        <taxon>Saccharomycetales</taxon>
        <taxon>Saccharomycetaceae</taxon>
        <taxon>Vanderwaltozyma</taxon>
    </lineage>
</organism>
<proteinExistence type="inferred from homology"/>
<keyword id="KW-0106">Calcium</keyword>
<keyword id="KW-0255">Endonuclease</keyword>
<keyword id="KW-0378">Hydrolase</keyword>
<keyword id="KW-0472">Membrane</keyword>
<keyword id="KW-0479">Metal-binding</keyword>
<keyword id="KW-0496">Mitochondrion</keyword>
<keyword id="KW-0540">Nuclease</keyword>
<keyword id="KW-1185">Reference proteome</keyword>
<keyword id="KW-0812">Transmembrane</keyword>
<keyword id="KW-1133">Transmembrane helix</keyword>
<gene>
    <name type="primary">LCL3</name>
    <name type="ORF">Kpol_1002p63</name>
</gene>
<protein>
    <recommendedName>
        <fullName>Probable endonuclease LCL3</fullName>
        <ecNumber>3.1.-.-</ecNumber>
    </recommendedName>
</protein>
<dbReference type="EC" id="3.1.-.-"/>
<dbReference type="EMBL" id="DS480379">
    <property type="protein sequence ID" value="EDO19416.1"/>
    <property type="molecule type" value="Genomic_DNA"/>
</dbReference>
<dbReference type="RefSeq" id="XP_001647274.1">
    <property type="nucleotide sequence ID" value="XM_001647224.1"/>
</dbReference>
<dbReference type="FunCoup" id="A7TE94">
    <property type="interactions" value="20"/>
</dbReference>
<dbReference type="STRING" id="436907.A7TE94"/>
<dbReference type="GeneID" id="5547766"/>
<dbReference type="KEGG" id="vpo:Kpol_1002p63"/>
<dbReference type="eggNOG" id="ENOG502S1U4">
    <property type="taxonomic scope" value="Eukaryota"/>
</dbReference>
<dbReference type="HOGENOM" id="CLU_046484_0_1_1"/>
<dbReference type="InParanoid" id="A7TE94"/>
<dbReference type="OMA" id="IYHTPGG"/>
<dbReference type="OrthoDB" id="430293at2759"/>
<dbReference type="PhylomeDB" id="A7TE94"/>
<dbReference type="Proteomes" id="UP000000267">
    <property type="component" value="Unassembled WGS sequence"/>
</dbReference>
<dbReference type="GO" id="GO:0016020">
    <property type="term" value="C:membrane"/>
    <property type="evidence" value="ECO:0007669"/>
    <property type="project" value="UniProtKB-SubCell"/>
</dbReference>
<dbReference type="GO" id="GO:0005739">
    <property type="term" value="C:mitochondrion"/>
    <property type="evidence" value="ECO:0007669"/>
    <property type="project" value="UniProtKB-SubCell"/>
</dbReference>
<dbReference type="GO" id="GO:0004519">
    <property type="term" value="F:endonuclease activity"/>
    <property type="evidence" value="ECO:0007669"/>
    <property type="project" value="UniProtKB-KW"/>
</dbReference>
<dbReference type="GO" id="GO:0046872">
    <property type="term" value="F:metal ion binding"/>
    <property type="evidence" value="ECO:0007669"/>
    <property type="project" value="UniProtKB-KW"/>
</dbReference>
<dbReference type="Gene3D" id="2.40.50.90">
    <property type="match status" value="1"/>
</dbReference>
<dbReference type="InterPro" id="IPR035437">
    <property type="entry name" value="SNase_OB-fold_sf"/>
</dbReference>
<dbReference type="InterPro" id="IPR016071">
    <property type="entry name" value="Staphylococal_nuclease_OB-fold"/>
</dbReference>
<dbReference type="PANTHER" id="PTHR12302">
    <property type="entry name" value="EBNA2 BINDING PROTEIN P100"/>
    <property type="match status" value="1"/>
</dbReference>
<dbReference type="PANTHER" id="PTHR12302:SF3">
    <property type="entry name" value="SERINE_THREONINE-PROTEIN KINASE 31"/>
    <property type="match status" value="1"/>
</dbReference>
<dbReference type="Pfam" id="PF00565">
    <property type="entry name" value="SNase"/>
    <property type="match status" value="1"/>
</dbReference>
<dbReference type="SMART" id="SM00318">
    <property type="entry name" value="SNc"/>
    <property type="match status" value="1"/>
</dbReference>
<dbReference type="SUPFAM" id="SSF50199">
    <property type="entry name" value="Staphylococcal nuclease"/>
    <property type="match status" value="1"/>
</dbReference>
<dbReference type="PROSITE" id="PS50830">
    <property type="entry name" value="TNASE_3"/>
    <property type="match status" value="1"/>
</dbReference>
<sequence>MSDIDEKNDTKESSFSSDVVLLSLLISGSTLGAIAGYNRYLKQVTKATDIPNYMFRKRWMYGKVTAVGDGDNFHLFHTPGGIFGGWGWLRKVPKLPKSDSNGLIVSRKKTSNFYSGLKNSYHKFTGSYRYSSEYFLDLKVPYKNLRNLPTVPIRLCAIDAPERAHFGNTSQPYGDEALIWLRNRLLGKYVWVKPLSVDQYNRCVSKVVCWNWLGWQNISLQMVRQGLAVVYEGKTSAEFDREEFLYRFYERRSKAKKRGLWRQRVIETPGEYKKKIKK</sequence>
<reference key="1">
    <citation type="journal article" date="2007" name="Proc. Natl. Acad. Sci. U.S.A.">
        <title>Independent sorting-out of thousands of duplicated gene pairs in two yeast species descended from a whole-genome duplication.</title>
        <authorList>
            <person name="Scannell D.R."/>
            <person name="Frank A.C."/>
            <person name="Conant G.C."/>
            <person name="Byrne K.P."/>
            <person name="Woolfit M."/>
            <person name="Wolfe K.H."/>
        </authorList>
    </citation>
    <scope>NUCLEOTIDE SEQUENCE [LARGE SCALE GENOMIC DNA]</scope>
    <source>
        <strain>ATCC 22028 / DSM 70294 / BCRC 21397 / CBS 2163 / NBRC 10782 / NRRL Y-8283 / UCD 57-17</strain>
    </source>
</reference>
<name>LCL3_VANPO</name>
<comment type="subcellular location">
    <subcellularLocation>
        <location>Mitochondrion</location>
    </subcellularLocation>
    <subcellularLocation>
        <location evidence="1">Membrane</location>
        <topology evidence="1">Single-pass membrane protein</topology>
    </subcellularLocation>
</comment>
<comment type="similarity">
    <text evidence="4">Belongs to the LCL3 family.</text>
</comment>
<accession>A7TE94</accession>
<feature type="chain" id="PRO_0000408685" description="Probable endonuclease LCL3">
    <location>
        <begin position="1"/>
        <end position="278"/>
    </location>
</feature>
<feature type="transmembrane region" description="Helical" evidence="2">
    <location>
        <begin position="15"/>
        <end position="37"/>
    </location>
</feature>
<feature type="domain" description="TNase-like" evidence="3">
    <location>
        <begin position="58"/>
        <end position="263"/>
    </location>
</feature>
<feature type="active site" evidence="3">
    <location>
        <position position="154"/>
    </location>
</feature>
<feature type="active site" evidence="3">
    <location>
        <position position="162"/>
    </location>
</feature>
<feature type="active site" evidence="3">
    <location>
        <position position="202"/>
    </location>
</feature>
<feature type="binding site" evidence="3">
    <location>
        <position position="159"/>
    </location>
    <ligand>
        <name>Ca(2+)</name>
        <dbReference type="ChEBI" id="CHEBI:29108"/>
    </ligand>
</feature>